<reference key="1">
    <citation type="journal article" date="1993" name="Mol. Cell. Biol.">
        <title>TIF4631 and TIF4632: two yeast genes encoding the high-molecular-weight subunits of the cap-binding protein complex (eukaryotic initiation factor 4F) contain an RNA recognition motif-like sequence and carry out an essential function.</title>
        <authorList>
            <person name="Goyer C."/>
            <person name="Altmann M."/>
            <person name="Lee H.S."/>
            <person name="Blanc A."/>
            <person name="Deshmukh M."/>
            <person name="Woolford J.L. Jr."/>
            <person name="Trachsel H."/>
            <person name="Sonenberg N."/>
        </authorList>
    </citation>
    <scope>NUCLEOTIDE SEQUENCE [GENOMIC DNA]</scope>
</reference>
<reference key="2">
    <citation type="journal article" date="1997" name="Yeast">
        <title>The characterization of two new clusters of duplicated genes suggests a 'Lego' organization of the yeast Saccharomyces cerevisiae chromosomes.</title>
        <authorList>
            <person name="Feuermann M."/>
            <person name="de Montigny J."/>
            <person name="Potier S."/>
            <person name="Souciet J.-L."/>
        </authorList>
    </citation>
    <scope>NUCLEOTIDE SEQUENCE [GENOMIC DNA]</scope>
    <source>
        <strain>ATCC 204508 / S288c</strain>
    </source>
</reference>
<reference key="3">
    <citation type="journal article" date="1997" name="Nature">
        <title>The nucleotide sequence of Saccharomyces cerevisiae chromosome VII.</title>
        <authorList>
            <person name="Tettelin H."/>
            <person name="Agostoni-Carbone M.L."/>
            <person name="Albermann K."/>
            <person name="Albers M."/>
            <person name="Arroyo J."/>
            <person name="Backes U."/>
            <person name="Barreiros T."/>
            <person name="Bertani I."/>
            <person name="Bjourson A.J."/>
            <person name="Brueckner M."/>
            <person name="Bruschi C.V."/>
            <person name="Carignani G."/>
            <person name="Castagnoli L."/>
            <person name="Cerdan E."/>
            <person name="Clemente M.L."/>
            <person name="Coblenz A."/>
            <person name="Coglievina M."/>
            <person name="Coissac E."/>
            <person name="Defoor E."/>
            <person name="Del Bino S."/>
            <person name="Delius H."/>
            <person name="Delneri D."/>
            <person name="de Wergifosse P."/>
            <person name="Dujon B."/>
            <person name="Durand P."/>
            <person name="Entian K.-D."/>
            <person name="Eraso P."/>
            <person name="Escribano V."/>
            <person name="Fabiani L."/>
            <person name="Fartmann B."/>
            <person name="Feroli F."/>
            <person name="Feuermann M."/>
            <person name="Frontali L."/>
            <person name="Garcia-Gonzalez M."/>
            <person name="Garcia-Saez M.I."/>
            <person name="Goffeau A."/>
            <person name="Guerreiro P."/>
            <person name="Hani J."/>
            <person name="Hansen M."/>
            <person name="Hebling U."/>
            <person name="Hernandez K."/>
            <person name="Heumann K."/>
            <person name="Hilger F."/>
            <person name="Hofmann B."/>
            <person name="Indge K.J."/>
            <person name="James C.M."/>
            <person name="Klima R."/>
            <person name="Koetter P."/>
            <person name="Kramer B."/>
            <person name="Kramer W."/>
            <person name="Lauquin G."/>
            <person name="Leuther H."/>
            <person name="Louis E.J."/>
            <person name="Maillier E."/>
            <person name="Marconi A."/>
            <person name="Martegani E."/>
            <person name="Mazon M.J."/>
            <person name="Mazzoni C."/>
            <person name="McReynolds A.D.K."/>
            <person name="Melchioretto P."/>
            <person name="Mewes H.-W."/>
            <person name="Minenkova O."/>
            <person name="Mueller-Auer S."/>
            <person name="Nawrocki A."/>
            <person name="Netter P."/>
            <person name="Neu R."/>
            <person name="Nombela C."/>
            <person name="Oliver S.G."/>
            <person name="Panzeri L."/>
            <person name="Paoluzi S."/>
            <person name="Plevani P."/>
            <person name="Portetelle D."/>
            <person name="Portillo F."/>
            <person name="Potier S."/>
            <person name="Purnelle B."/>
            <person name="Rieger M."/>
            <person name="Riles L."/>
            <person name="Rinaldi T."/>
            <person name="Robben J."/>
            <person name="Rodrigues-Pousada C."/>
            <person name="Rodriguez-Belmonte E."/>
            <person name="Rodriguez-Torres A.M."/>
            <person name="Rose M."/>
            <person name="Ruzzi M."/>
            <person name="Saliola M."/>
            <person name="Sanchez-Perez M."/>
            <person name="Schaefer B."/>
            <person name="Schaefer M."/>
            <person name="Scharfe M."/>
            <person name="Schmidheini T."/>
            <person name="Schreer A."/>
            <person name="Skala J."/>
            <person name="Souciet J.-L."/>
            <person name="Steensma H.Y."/>
            <person name="Talla E."/>
            <person name="Thierry A."/>
            <person name="Vandenbol M."/>
            <person name="van der Aart Q.J.M."/>
            <person name="Van Dyck L."/>
            <person name="Vanoni M."/>
            <person name="Verhasselt P."/>
            <person name="Voet M."/>
            <person name="Volckaert G."/>
            <person name="Wambutt R."/>
            <person name="Watson M.D."/>
            <person name="Weber N."/>
            <person name="Wedler E."/>
            <person name="Wedler H."/>
            <person name="Wipfli P."/>
            <person name="Wolf K."/>
            <person name="Wright L.F."/>
            <person name="Zaccaria P."/>
            <person name="Zimmermann M."/>
            <person name="Zollner A."/>
            <person name="Kleine K."/>
        </authorList>
    </citation>
    <scope>NUCLEOTIDE SEQUENCE [LARGE SCALE GENOMIC DNA]</scope>
    <source>
        <strain>ATCC 204508 / S288c</strain>
    </source>
</reference>
<reference key="4">
    <citation type="journal article" date="2014" name="G3 (Bethesda)">
        <title>The reference genome sequence of Saccharomyces cerevisiae: Then and now.</title>
        <authorList>
            <person name="Engel S.R."/>
            <person name="Dietrich F.S."/>
            <person name="Fisk D.G."/>
            <person name="Binkley G."/>
            <person name="Balakrishnan R."/>
            <person name="Costanzo M.C."/>
            <person name="Dwight S.S."/>
            <person name="Hitz B.C."/>
            <person name="Karra K."/>
            <person name="Nash R.S."/>
            <person name="Weng S."/>
            <person name="Wong E.D."/>
            <person name="Lloyd P."/>
            <person name="Skrzypek M.S."/>
            <person name="Miyasato S.R."/>
            <person name="Simison M."/>
            <person name="Cherry J.M."/>
        </authorList>
    </citation>
    <scope>GENOME REANNOTATION</scope>
    <source>
        <strain>ATCC 204508 / S288c</strain>
    </source>
</reference>
<reference key="5">
    <citation type="journal article" date="1996" name="EMBO J.">
        <title>Association of the yeast poly(A) tail binding protein with translation initiation factor eIF-4G.</title>
        <authorList>
            <person name="Tarun S.Z. Jr."/>
            <person name="Sachs A.B."/>
        </authorList>
    </citation>
    <scope>INTERACTION WITH PAB1</scope>
</reference>
<reference key="6">
    <citation type="journal article" date="1997" name="Proc. Natl. Acad. Sci. U.S.A.">
        <title>Translation initiation factor eIF4G mediates in vitro poly(A) tail-dependent translation.</title>
        <authorList>
            <person name="Tarun S.Z. Jr."/>
            <person name="Wells S.E."/>
            <person name="Deardorff J.A."/>
            <person name="Sachs A.B."/>
        </authorList>
    </citation>
    <scope>FUNCTION</scope>
    <scope>INTERACTION WITH PAB1</scope>
    <scope>MUTAGENESIS OF 233-ARG--LYS-236</scope>
</reference>
<reference key="7">
    <citation type="journal article" date="1998" name="Mol. Cell. Biol.">
        <title>RNA recognition motif 2 of yeast Pab1p is required for its functional interaction with eukaryotic translation initiation factor 4G.</title>
        <authorList>
            <person name="Kessler S.H."/>
            <person name="Sachs A.B."/>
        </authorList>
    </citation>
    <scope>INTERACTION WITH PAB1</scope>
</reference>
<reference key="8">
    <citation type="journal article" date="1999" name="EMBO J.">
        <title>The yeast poly(A)-binding protein Pab1p stimulates in vitro poly(A)-dependent and cap-dependent translation by distinct mechanisms.</title>
        <authorList>
            <person name="Otero L.J."/>
            <person name="Ashe M.P."/>
            <person name="Sachs A.B."/>
        </authorList>
    </citation>
    <scope>FUNCTION</scope>
    <scope>INTERACTION WITH PAB1</scope>
</reference>
<reference key="9">
    <citation type="journal article" date="2001" name="Mol. Cell">
        <title>Targeting an mRNA for decapping: displacement of translation factors and association of the Lsm1p-7p complex on deadenylated yeast mRNAs.</title>
        <authorList>
            <person name="Tharun S."/>
            <person name="Parker R."/>
        </authorList>
    </citation>
    <scope>INTERACTION WITH PAT1</scope>
</reference>
<reference key="10">
    <citation type="journal article" date="2003" name="Nature">
        <title>Global analysis of protein localization in budding yeast.</title>
        <authorList>
            <person name="Huh W.-K."/>
            <person name="Falvo J.V."/>
            <person name="Gerke L.C."/>
            <person name="Carroll A.S."/>
            <person name="Howson R.W."/>
            <person name="Weissman J.S."/>
            <person name="O'Shea E.K."/>
        </authorList>
    </citation>
    <scope>SUBCELLULAR LOCATION [LARGE SCALE ANALYSIS]</scope>
</reference>
<reference key="11">
    <citation type="journal article" date="2003" name="Nature">
        <title>Global analysis of protein expression in yeast.</title>
        <authorList>
            <person name="Ghaemmaghami S."/>
            <person name="Huh W.-K."/>
            <person name="Bower K."/>
            <person name="Howson R.W."/>
            <person name="Belle A."/>
            <person name="Dephoure N."/>
            <person name="O'Shea E.K."/>
            <person name="Weissman J.S."/>
        </authorList>
    </citation>
    <scope>LEVEL OF PROTEIN EXPRESSION [LARGE SCALE ANALYSIS]</scope>
</reference>
<reference key="12">
    <citation type="journal article" date="2007" name="J. Proteome Res.">
        <title>Large-scale phosphorylation analysis of alpha-factor-arrested Saccharomyces cerevisiae.</title>
        <authorList>
            <person name="Li X."/>
            <person name="Gerber S.A."/>
            <person name="Rudner A.D."/>
            <person name="Beausoleil S.A."/>
            <person name="Haas W."/>
            <person name="Villen J."/>
            <person name="Elias J.E."/>
            <person name="Gygi S.P."/>
        </authorList>
    </citation>
    <scope>PHOSPHORYLATION [LARGE SCALE ANALYSIS] AT THR-301 AND SER-913</scope>
    <scope>IDENTIFICATION BY MASS SPECTROMETRY [LARGE SCALE ANALYSIS]</scope>
    <source>
        <strain>ADR376</strain>
    </source>
</reference>
<reference key="13">
    <citation type="journal article" date="2007" name="Proc. Natl. Acad. Sci. U.S.A.">
        <title>Analysis of phosphorylation sites on proteins from Saccharomyces cerevisiae by electron transfer dissociation (ETD) mass spectrometry.</title>
        <authorList>
            <person name="Chi A."/>
            <person name="Huttenhower C."/>
            <person name="Geer L.Y."/>
            <person name="Coon J.J."/>
            <person name="Syka J.E.P."/>
            <person name="Bai D.L."/>
            <person name="Shabanowitz J."/>
            <person name="Burke D.J."/>
            <person name="Troyanskaya O.G."/>
            <person name="Hunt D.F."/>
        </authorList>
    </citation>
    <scope>PHOSPHORYLATION [LARGE SCALE ANALYSIS] AT SER-503</scope>
    <scope>IDENTIFICATION BY MASS SPECTROMETRY [LARGE SCALE ANALYSIS]</scope>
</reference>
<reference key="14">
    <citation type="journal article" date="2008" name="Mol. Cell. Proteomics">
        <title>A multidimensional chromatography technology for in-depth phosphoproteome analysis.</title>
        <authorList>
            <person name="Albuquerque C.P."/>
            <person name="Smolka M.B."/>
            <person name="Payne S.H."/>
            <person name="Bafna V."/>
            <person name="Eng J."/>
            <person name="Zhou H."/>
        </authorList>
    </citation>
    <scope>PHOSPHORYLATION [LARGE SCALE ANALYSIS] AT THR-196</scope>
    <scope>IDENTIFICATION BY MASS SPECTROMETRY [LARGE SCALE ANALYSIS]</scope>
</reference>
<reference key="15">
    <citation type="journal article" date="2009" name="Science">
        <title>Global analysis of Cdk1 substrate phosphorylation sites provides insights into evolution.</title>
        <authorList>
            <person name="Holt L.J."/>
            <person name="Tuch B.B."/>
            <person name="Villen J."/>
            <person name="Johnson A.D."/>
            <person name="Gygi S.P."/>
            <person name="Morgan D.O."/>
        </authorList>
    </citation>
    <scope>PHOSPHORYLATION [LARGE SCALE ANALYSIS] AT SER-74; THR-196 AND SER-913</scope>
    <scope>IDENTIFICATION BY MASS SPECTROMETRY [LARGE SCALE ANALYSIS]</scope>
</reference>
<organism>
    <name type="scientific">Saccharomyces cerevisiae (strain ATCC 204508 / S288c)</name>
    <name type="common">Baker's yeast</name>
    <dbReference type="NCBI Taxonomy" id="559292"/>
    <lineage>
        <taxon>Eukaryota</taxon>
        <taxon>Fungi</taxon>
        <taxon>Dikarya</taxon>
        <taxon>Ascomycota</taxon>
        <taxon>Saccharomycotina</taxon>
        <taxon>Saccharomycetes</taxon>
        <taxon>Saccharomycetales</taxon>
        <taxon>Saccharomycetaceae</taxon>
        <taxon>Saccharomyces</taxon>
    </lineage>
</organism>
<gene>
    <name evidence="10" type="primary">TIF4632</name>
    <name type="ordered locus">YGL049C</name>
</gene>
<proteinExistence type="evidence at protein level"/>
<name>IF4F2_YEAST</name>
<keyword id="KW-0963">Cytoplasm</keyword>
<keyword id="KW-0396">Initiation factor</keyword>
<keyword id="KW-0597">Phosphoprotein</keyword>
<keyword id="KW-0648">Protein biosynthesis</keyword>
<keyword id="KW-1185">Reference proteome</keyword>
<keyword id="KW-0694">RNA-binding</keyword>
<keyword id="KW-0810">Translation regulation</keyword>
<sequence length="914" mass="103899">MTDQRGPPPPHPQQANGYKKFPPHDNQYSGANNSQPNNHYNENLYSAREPHNNKQYQSKNGKYGTNKYNNRNNSQGNAQYYNNRFNNGYRLNNNDYNPAMLPGMQWPANYYAPQMYYIPQQMVPVASPPYTHQPLNTNPEPPSTPKTTKIEITTKTGERLNLKKFHEEKKASKGEEKNDGVEQKSKSGTPFEKEATPVLPANEAVKDTLTETSNEKSTSEAENTKRLFLEQVRLRKAAMERKKNGLISETEKKQETSNHDNTDTTKPNSVIESEPIKEAPKPTGEANEVVIDGKSGASVKTPQHVTGSVTKSVTFNEPENESSSQDVDELVKDDDTTEISDTTGGKTVNKSDDETINSVITTEENTVKETEPSTSDIEMPTVSQLLETLGKAQPISDIYEFAYPENVERPDIKYKKPSVKYTYGPTFLLQFKDKLKFRPDPAWVEAVSSKIVIPPHIARNKPKDSGRFGGDFRSPSMRGMDHTSSSRVSSKRRSKRMGDDRRSNRGYTSRKDREKAAEKAEEQAPKEEIAPLVPSANRWIPKSRVKKTEKKLAPDGKTELFDKEEVERKMKSLLNKLTLEMFDSISSEILDIANQSKWEDDGETLKIVIEQIFHKACDEPHWSSMYAQLCGKVVKDLDPNIKDKENEGKNGPKLVLHYLVARCHEEFEKGWADKLPAGEDGNPLEPEMMSDEYYIAAAAKRRGLGLVRFIGYLYCLNLLTGKMMFECFRRLMKDLNNDPSEETLESVIELLNTVGEQFEHDKFVTPQATLEGSVLLDNLFMLLQHIIDGGTISNRIKFKLIDVKELREIKHWNSAKKDAGPKTIQQIHQEEEQLRQKKNSQRSNSRFNNHNQSNSNRYSSNRRNMQNTQRDSFASTKTGSFRNNQRNARKVEEVSQAPRANMFDALMNNDGDSD</sequence>
<feature type="chain" id="PRO_0000213332" description="Eukaryotic initiation factor 4F subunit p130">
    <location>
        <begin position="1"/>
        <end position="914"/>
    </location>
</feature>
<feature type="domain" description="MIF4G">
    <location>
        <begin position="567"/>
        <end position="810"/>
    </location>
</feature>
<feature type="region of interest" description="Disordered" evidence="2">
    <location>
        <begin position="1"/>
        <end position="84"/>
    </location>
</feature>
<feature type="region of interest" description="Disordered" evidence="2">
    <location>
        <begin position="128"/>
        <end position="205"/>
    </location>
</feature>
<feature type="region of interest" description="Interaction with PAB1">
    <location>
        <begin position="201"/>
        <end position="315"/>
    </location>
</feature>
<feature type="region of interest" description="Disordered" evidence="2">
    <location>
        <begin position="240"/>
        <end position="351"/>
    </location>
</feature>
<feature type="region of interest" description="Disordered" evidence="2">
    <location>
        <begin position="457"/>
        <end position="535"/>
    </location>
</feature>
<feature type="region of interest" description="Disordered" evidence="2">
    <location>
        <begin position="833"/>
        <end position="914"/>
    </location>
</feature>
<feature type="compositionally biased region" description="Pro residues" evidence="2">
    <location>
        <begin position="1"/>
        <end position="12"/>
    </location>
</feature>
<feature type="compositionally biased region" description="Polar residues" evidence="2">
    <location>
        <begin position="26"/>
        <end position="44"/>
    </location>
</feature>
<feature type="compositionally biased region" description="Low complexity" evidence="2">
    <location>
        <begin position="59"/>
        <end position="73"/>
    </location>
</feature>
<feature type="compositionally biased region" description="Low complexity" evidence="2">
    <location>
        <begin position="145"/>
        <end position="155"/>
    </location>
</feature>
<feature type="compositionally biased region" description="Basic and acidic residues" evidence="2">
    <location>
        <begin position="156"/>
        <end position="195"/>
    </location>
</feature>
<feature type="compositionally biased region" description="Basic and acidic residues" evidence="2">
    <location>
        <begin position="240"/>
        <end position="263"/>
    </location>
</feature>
<feature type="compositionally biased region" description="Polar residues" evidence="2">
    <location>
        <begin position="298"/>
        <end position="325"/>
    </location>
</feature>
<feature type="compositionally biased region" description="Polar residues" evidence="2">
    <location>
        <begin position="339"/>
        <end position="348"/>
    </location>
</feature>
<feature type="compositionally biased region" description="Basic and acidic residues" evidence="2">
    <location>
        <begin position="496"/>
        <end position="529"/>
    </location>
</feature>
<feature type="compositionally biased region" description="Low complexity" evidence="2">
    <location>
        <begin position="841"/>
        <end position="867"/>
    </location>
</feature>
<feature type="compositionally biased region" description="Polar residues" evidence="2">
    <location>
        <begin position="868"/>
        <end position="886"/>
    </location>
</feature>
<feature type="modified residue" description="Phosphoserine" evidence="15">
    <location>
        <position position="74"/>
    </location>
</feature>
<feature type="modified residue" description="Phosphothreonine" evidence="14 15">
    <location>
        <position position="196"/>
    </location>
</feature>
<feature type="modified residue" description="Phosphothreonine" evidence="13">
    <location>
        <position position="301"/>
    </location>
</feature>
<feature type="modified residue" description="Phosphoserine" evidence="12">
    <location>
        <position position="503"/>
    </location>
</feature>
<feature type="modified residue" description="Phosphoserine" evidence="13 15">
    <location>
        <position position="913"/>
    </location>
</feature>
<feature type="mutagenesis site" description="In TIF4632-233; abolishes interaction with PAB1 and inhibits poly(A)-dependent translation." evidence="8">
    <original>RLRK</original>
    <variation>AVAA</variation>
    <location>
        <begin position="233"/>
        <end position="236"/>
    </location>
</feature>
<comment type="function">
    <text evidence="3 8">Component of the eIF4F complex, which interacts with the mRNA cap structure and serves as an initial point of assembly for the translation apparatus. Stimulates translation by interaction with polyadenylate-binding protein PAB1, bringing the 5'- and 3'-ends of the mRNA in proximity. The formation of this circular mRNP structure appears to be critical for the synergistic effects of the cap and the poly(A) tail in facilitating translation initiation, recycling of ribosomes, and mRNA stability. TIF4632 is probably essential when TIF4631 is missing.</text>
</comment>
<comment type="subunit">
    <text evidence="1 3 4 7 8 9">Component of the eIF4F complex, which composition varies with external and internal environmental conditions. It is composed of at least eIF4A (TIF1/TIF2), eIF4E (TIF45) and eIF4G (TIF4631 or TIF4632) (By similarity). Interacts with PAT1 in a RNA-dependent manner.</text>
</comment>
<comment type="interaction">
    <interactant intactId="EBI-9006">
        <id>P39936</id>
    </interactant>
    <interactant intactId="EBI-12823">
        <id>P04147</id>
        <label>PAB1</label>
    </interactant>
    <organismsDiffer>false</organismsDiffer>
    <experiments>3</experiments>
</comment>
<comment type="subcellular location">
    <subcellularLocation>
        <location evidence="5">Cytoplasm</location>
    </subcellularLocation>
</comment>
<comment type="miscellaneous">
    <text evidence="6">Present with 3390 molecules/cell in log phase SD medium.</text>
</comment>
<comment type="similarity">
    <text evidence="11">Belongs to the eukaryotic initiation factor 4G family.</text>
</comment>
<evidence type="ECO:0000250" key="1"/>
<evidence type="ECO:0000256" key="2">
    <source>
        <dbReference type="SAM" id="MobiDB-lite"/>
    </source>
</evidence>
<evidence type="ECO:0000269" key="3">
    <source>
    </source>
</evidence>
<evidence type="ECO:0000269" key="4">
    <source>
    </source>
</evidence>
<evidence type="ECO:0000269" key="5">
    <source>
    </source>
</evidence>
<evidence type="ECO:0000269" key="6">
    <source>
    </source>
</evidence>
<evidence type="ECO:0000269" key="7">
    <source>
    </source>
</evidence>
<evidence type="ECO:0000269" key="8">
    <source>
    </source>
</evidence>
<evidence type="ECO:0000269" key="9">
    <source>
    </source>
</evidence>
<evidence type="ECO:0000303" key="10">
    <source>
    </source>
</evidence>
<evidence type="ECO:0000305" key="11"/>
<evidence type="ECO:0007744" key="12">
    <source>
    </source>
</evidence>
<evidence type="ECO:0007744" key="13">
    <source>
    </source>
</evidence>
<evidence type="ECO:0007744" key="14">
    <source>
    </source>
</evidence>
<evidence type="ECO:0007744" key="15">
    <source>
    </source>
</evidence>
<protein>
    <recommendedName>
        <fullName>Eukaryotic initiation factor 4F subunit p130</fullName>
        <shortName>eIF-4F p130</shortName>
        <shortName>eIF4F p130</shortName>
    </recommendedName>
    <alternativeName>
        <fullName evidence="10">Translation initiation factor 4(4)-F(6) subunit gamma(3) protein 2</fullName>
    </alternativeName>
    <alternativeName>
        <fullName>eIF4G2</fullName>
    </alternativeName>
    <alternativeName>
        <fullName>mRNA cap-binding protein complex subunit p130</fullName>
    </alternativeName>
</protein>
<accession>P39936</accession>
<accession>D6VU91</accession>
<dbReference type="EMBL" id="L16924">
    <property type="protein sequence ID" value="AAA18474.1"/>
    <property type="molecule type" value="Unassigned_DNA"/>
</dbReference>
<dbReference type="EMBL" id="Z72571">
    <property type="protein sequence ID" value="CAA96751.1"/>
    <property type="molecule type" value="Genomic_DNA"/>
</dbReference>
<dbReference type="EMBL" id="BK006941">
    <property type="protein sequence ID" value="DAA08052.1"/>
    <property type="molecule type" value="Genomic_DNA"/>
</dbReference>
<dbReference type="PIR" id="B48086">
    <property type="entry name" value="B48086"/>
</dbReference>
<dbReference type="RefSeq" id="NP_011466.1">
    <property type="nucleotide sequence ID" value="NM_001180914.1"/>
</dbReference>
<dbReference type="SMR" id="P39936"/>
<dbReference type="BioGRID" id="33199">
    <property type="interactions" value="184"/>
</dbReference>
<dbReference type="ComplexPortal" id="CPX-431">
    <property type="entry name" value="Eukaryotic translation initiation factor 4F complex, variant TIF4632"/>
</dbReference>
<dbReference type="DIP" id="DIP-330N"/>
<dbReference type="ELM" id="P39936"/>
<dbReference type="FunCoup" id="P39936">
    <property type="interactions" value="511"/>
</dbReference>
<dbReference type="IntAct" id="P39936">
    <property type="interactions" value="69"/>
</dbReference>
<dbReference type="MINT" id="P39936"/>
<dbReference type="STRING" id="4932.YGL049C"/>
<dbReference type="GlyGen" id="P39936">
    <property type="glycosylation" value="3 sites, 1 O-linked glycan (3 sites)"/>
</dbReference>
<dbReference type="iPTMnet" id="P39936"/>
<dbReference type="PaxDb" id="4932-YGL049C"/>
<dbReference type="PeptideAtlas" id="P39936"/>
<dbReference type="EnsemblFungi" id="YGL049C_mRNA">
    <property type="protein sequence ID" value="YGL049C"/>
    <property type="gene ID" value="YGL049C"/>
</dbReference>
<dbReference type="GeneID" id="852833"/>
<dbReference type="KEGG" id="sce:YGL049C"/>
<dbReference type="AGR" id="SGD:S000003017"/>
<dbReference type="SGD" id="S000003017">
    <property type="gene designation" value="TIF4632"/>
</dbReference>
<dbReference type="VEuPathDB" id="FungiDB:YGL049C"/>
<dbReference type="eggNOG" id="KOG0401">
    <property type="taxonomic scope" value="Eukaryota"/>
</dbReference>
<dbReference type="GeneTree" id="ENSGT00940000154675"/>
<dbReference type="HOGENOM" id="CLU_006715_1_0_1"/>
<dbReference type="InParanoid" id="P39936"/>
<dbReference type="OMA" id="EMELWED"/>
<dbReference type="OrthoDB" id="514777at2759"/>
<dbReference type="BioCyc" id="YEAST:G3O-30559-MONOMER"/>
<dbReference type="BioGRID-ORCS" id="852833">
    <property type="hits" value="2 hits in 10 CRISPR screens"/>
</dbReference>
<dbReference type="CD-CODE" id="26E28FFB">
    <property type="entry name" value="Synthetic Condensate 000009"/>
</dbReference>
<dbReference type="CD-CODE" id="A777E0F8">
    <property type="entry name" value="P-body"/>
</dbReference>
<dbReference type="CD-CODE" id="BD836276">
    <property type="entry name" value="Synthetic Condensate 000030"/>
</dbReference>
<dbReference type="CD-CODE" id="CABCA76D">
    <property type="entry name" value="Synthetic Condensate 000018"/>
</dbReference>
<dbReference type="CD-CODE" id="CEC93CD4">
    <property type="entry name" value="Synthetic Condensate 000048"/>
</dbReference>
<dbReference type="CD-CODE" id="E03F929F">
    <property type="entry name" value="Stress granule"/>
</dbReference>
<dbReference type="PRO" id="PR:P39936"/>
<dbReference type="Proteomes" id="UP000002311">
    <property type="component" value="Chromosome VII"/>
</dbReference>
<dbReference type="RNAct" id="P39936">
    <property type="molecule type" value="protein"/>
</dbReference>
<dbReference type="GO" id="GO:0010494">
    <property type="term" value="C:cytoplasmic stress granule"/>
    <property type="evidence" value="ECO:0000314"/>
    <property type="project" value="SGD"/>
</dbReference>
<dbReference type="GO" id="GO:0016281">
    <property type="term" value="C:eukaryotic translation initiation factor 4F complex"/>
    <property type="evidence" value="ECO:0000315"/>
    <property type="project" value="SGD"/>
</dbReference>
<dbReference type="GO" id="GO:0000932">
    <property type="term" value="C:P-body"/>
    <property type="evidence" value="ECO:0000314"/>
    <property type="project" value="SGD"/>
</dbReference>
<dbReference type="GO" id="GO:0005840">
    <property type="term" value="C:ribosome"/>
    <property type="evidence" value="ECO:0000303"/>
    <property type="project" value="ComplexPortal"/>
</dbReference>
<dbReference type="GO" id="GO:0001671">
    <property type="term" value="F:ATPase activator activity"/>
    <property type="evidence" value="ECO:0000250"/>
    <property type="project" value="SGD"/>
</dbReference>
<dbReference type="GO" id="GO:0003729">
    <property type="term" value="F:mRNA binding"/>
    <property type="evidence" value="ECO:0000314"/>
    <property type="project" value="SGD"/>
</dbReference>
<dbReference type="GO" id="GO:0003743">
    <property type="term" value="F:translation initiation factor activity"/>
    <property type="evidence" value="ECO:0000314"/>
    <property type="project" value="SGD"/>
</dbReference>
<dbReference type="GO" id="GO:0031369">
    <property type="term" value="F:translation initiation factor binding"/>
    <property type="evidence" value="ECO:0000314"/>
    <property type="project" value="SGD"/>
</dbReference>
<dbReference type="GO" id="GO:0042149">
    <property type="term" value="P:cellular response to glucose starvation"/>
    <property type="evidence" value="ECO:0000315"/>
    <property type="project" value="SGD"/>
</dbReference>
<dbReference type="GO" id="GO:1901195">
    <property type="term" value="P:positive regulation of formation of translation preinitiation complex"/>
    <property type="evidence" value="ECO:0000250"/>
    <property type="project" value="SGD"/>
</dbReference>
<dbReference type="GO" id="GO:0006446">
    <property type="term" value="P:regulation of translational initiation"/>
    <property type="evidence" value="ECO:0000303"/>
    <property type="project" value="ComplexPortal"/>
</dbReference>
<dbReference type="GO" id="GO:0034063">
    <property type="term" value="P:stress granule assembly"/>
    <property type="evidence" value="ECO:0000315"/>
    <property type="project" value="SGD"/>
</dbReference>
<dbReference type="GO" id="GO:0006413">
    <property type="term" value="P:translational initiation"/>
    <property type="evidence" value="ECO:0000314"/>
    <property type="project" value="SGD"/>
</dbReference>
<dbReference type="FunFam" id="1.25.40.180:FF:000020">
    <property type="entry name" value="Eukaryotic translation initiation factor subunit"/>
    <property type="match status" value="1"/>
</dbReference>
<dbReference type="FunFam" id="1.20.970.30:FF:000002">
    <property type="entry name" value="Translation initiation factor eIF4G"/>
    <property type="match status" value="1"/>
</dbReference>
<dbReference type="Gene3D" id="1.25.40.180">
    <property type="match status" value="1"/>
</dbReference>
<dbReference type="Gene3D" id="1.20.970.30">
    <property type="entry name" value="eIF4G, eIF4E-binding domain"/>
    <property type="match status" value="1"/>
</dbReference>
<dbReference type="InterPro" id="IPR016024">
    <property type="entry name" value="ARM-type_fold"/>
</dbReference>
<dbReference type="InterPro" id="IPR022745">
    <property type="entry name" value="eIF4G1_eIF4E-bd"/>
</dbReference>
<dbReference type="InterPro" id="IPR036211">
    <property type="entry name" value="eIF4G_eIF4E-bd_sf"/>
</dbReference>
<dbReference type="InterPro" id="IPR003890">
    <property type="entry name" value="MIF4G-like_typ-3"/>
</dbReference>
<dbReference type="PANTHER" id="PTHR23253">
    <property type="entry name" value="EUKARYOTIC TRANSLATION INITIATION FACTOR 4 GAMMA"/>
    <property type="match status" value="1"/>
</dbReference>
<dbReference type="PANTHER" id="PTHR23253:SF9">
    <property type="entry name" value="EUKARYOTIC TRANSLATION INITIATION FACTOR 4 GAMMA 2"/>
    <property type="match status" value="1"/>
</dbReference>
<dbReference type="Pfam" id="PF12152">
    <property type="entry name" value="eIF_4G1"/>
    <property type="match status" value="1"/>
</dbReference>
<dbReference type="Pfam" id="PF02854">
    <property type="entry name" value="MIF4G"/>
    <property type="match status" value="1"/>
</dbReference>
<dbReference type="SMART" id="SM00543">
    <property type="entry name" value="MIF4G"/>
    <property type="match status" value="1"/>
</dbReference>
<dbReference type="SUPFAM" id="SSF48371">
    <property type="entry name" value="ARM repeat"/>
    <property type="match status" value="1"/>
</dbReference>
<dbReference type="SUPFAM" id="SSF101489">
    <property type="entry name" value="Eukaryotic initiation factor 4f subunit eIF4g, eIF4e-binding domain"/>
    <property type="match status" value="1"/>
</dbReference>